<keyword id="KW-0878">Amphibian defense peptide</keyword>
<keyword id="KW-0903">Direct protein sequencing</keyword>
<keyword id="KW-0964">Secreted</keyword>
<feature type="peptide" id="PRO_0000043730" description="Aurein-4.4">
    <location>
        <begin position="1"/>
        <end position="23"/>
    </location>
</feature>
<sequence>GLLQTIKEKLKELATGLVIGVQS</sequence>
<comment type="function">
    <text evidence="1">Has no antimicrobial or anticancer activity.</text>
</comment>
<comment type="subcellular location">
    <subcellularLocation>
        <location>Secreted</location>
    </subcellularLocation>
</comment>
<comment type="tissue specificity">
    <text>Expressed by the skin dorsal glands.</text>
</comment>
<comment type="similarity">
    <text evidence="2">Belongs to the frog skin active peptide (FSAP) family. Aurein subfamily.</text>
</comment>
<name>AUR44_RANRN</name>
<organism>
    <name type="scientific">Ranoidea raniformis</name>
    <name type="common">Southern bell frog</name>
    <name type="synonym">Litoria raniformis</name>
    <dbReference type="NCBI Taxonomy" id="116057"/>
    <lineage>
        <taxon>Eukaryota</taxon>
        <taxon>Metazoa</taxon>
        <taxon>Chordata</taxon>
        <taxon>Craniata</taxon>
        <taxon>Vertebrata</taxon>
        <taxon>Euteleostomi</taxon>
        <taxon>Amphibia</taxon>
        <taxon>Batrachia</taxon>
        <taxon>Anura</taxon>
        <taxon>Neobatrachia</taxon>
        <taxon>Hyloidea</taxon>
        <taxon>Hylidae</taxon>
        <taxon>Pelodryadinae</taxon>
        <taxon>Ranoidea</taxon>
    </lineage>
</organism>
<accession>P69026</accession>
<accession>P82400</accession>
<reference key="1">
    <citation type="journal article" date="2000" name="Eur. J. Biochem.">
        <title>The antibiotic and anticancer active aurein peptides from the australian bell frogs Litoria aurea and Litoria raniformis the solution structure of aurein 1.2.</title>
        <authorList>
            <person name="Rozek T."/>
            <person name="Wegener K.L."/>
            <person name="Bowie J.H."/>
            <person name="Olver I.N."/>
            <person name="Carver J.A."/>
            <person name="Wallace J.C."/>
            <person name="Tyler M.J."/>
        </authorList>
    </citation>
    <scope>PROTEIN SEQUENCE</scope>
    <scope>FUNCTION</scope>
    <source>
        <tissue>Skin secretion</tissue>
    </source>
</reference>
<protein>
    <recommendedName>
        <fullName>Aurein-4.4</fullName>
    </recommendedName>
</protein>
<proteinExistence type="evidence at protein level"/>
<dbReference type="GO" id="GO:0005576">
    <property type="term" value="C:extracellular region"/>
    <property type="evidence" value="ECO:0007669"/>
    <property type="project" value="UniProtKB-SubCell"/>
</dbReference>
<dbReference type="GO" id="GO:0006952">
    <property type="term" value="P:defense response"/>
    <property type="evidence" value="ECO:0007669"/>
    <property type="project" value="UniProtKB-KW"/>
</dbReference>
<evidence type="ECO:0000269" key="1">
    <source>
    </source>
</evidence>
<evidence type="ECO:0000305" key="2"/>